<comment type="function">
    <text evidence="2">Catalyzes the hydrolysis of the 1-position phosphate from inositol 1,4-bisphosphate (PubMed:25372691). Is also able to convert 3'(2')-phosphoadenosine 5'-phosphate (PAP) to AMP but with less efficiency (PubMed:25372691).</text>
</comment>
<comment type="catalytic activity">
    <reaction evidence="2">
        <text>1D-myo-inositol 1,4-bisphosphate + H2O = 1D-myo-inositol 4-phosphate + phosphate</text>
        <dbReference type="Rhea" id="RHEA:15553"/>
        <dbReference type="ChEBI" id="CHEBI:15377"/>
        <dbReference type="ChEBI" id="CHEBI:43474"/>
        <dbReference type="ChEBI" id="CHEBI:58282"/>
        <dbReference type="ChEBI" id="CHEBI:58469"/>
        <dbReference type="EC" id="3.1.3.57"/>
    </reaction>
</comment>
<comment type="catalytic activity">
    <reaction evidence="2">
        <text>adenosine 3',5'-bisphosphate + H2O = AMP + phosphate</text>
        <dbReference type="Rhea" id="RHEA:10040"/>
        <dbReference type="ChEBI" id="CHEBI:15377"/>
        <dbReference type="ChEBI" id="CHEBI:43474"/>
        <dbReference type="ChEBI" id="CHEBI:58343"/>
        <dbReference type="ChEBI" id="CHEBI:456215"/>
        <dbReference type="EC" id="3.1.3.7"/>
    </reaction>
</comment>
<comment type="cofactor">
    <cofactor evidence="2">
        <name>Mg(2+)</name>
        <dbReference type="ChEBI" id="CHEBI:18420"/>
    </cofactor>
    <text evidence="2">Binds 3 Mg(2+) per subunit.</text>
</comment>
<comment type="activity regulation">
    <text evidence="2">Partially inhibited by Li(2+).</text>
</comment>
<comment type="biophysicochemical properties">
    <phDependence>
        <text evidence="2">Optimum pH is 7.5 (with 3'(2')-phosphoadenosine 5'-phosphate (PAP) as substrate).</text>
    </phDependence>
    <temperatureDependence>
        <text evidence="2">Optimum temperature is 60 degrees Celsius (with 3'(2')-phosphoadenosine 5'-phosphate (PAP) as substrate) (PubMed:25372691). Active between 30 and 80 degrees Celsius (PubMed:25372691).</text>
    </temperatureDependence>
</comment>
<comment type="subunit">
    <text evidence="2">Monomer.</text>
</comment>
<comment type="subcellular location">
    <subcellularLocation>
        <location evidence="2">Cytoplasm</location>
    </subcellularLocation>
</comment>
<comment type="developmental stage">
    <text evidence="2">Expressed in trophozoites (at protein level).</text>
</comment>
<comment type="similarity">
    <text evidence="4">Belongs to the inositol monophosphatase superfamily.</text>
</comment>
<organism evidence="7">
    <name type="scientific">Entamoeba histolytica (strain ATCC 30459 / HM-1:IMSS / ABRM)</name>
    <dbReference type="NCBI Taxonomy" id="294381"/>
    <lineage>
        <taxon>Eukaryota</taxon>
        <taxon>Amoebozoa</taxon>
        <taxon>Evosea</taxon>
        <taxon>Archamoebae</taxon>
        <taxon>Mastigamoebida</taxon>
        <taxon>Entamoebidae</taxon>
        <taxon>Entamoeba</taxon>
    </lineage>
</organism>
<evidence type="ECO:0000250" key="1">
    <source>
        <dbReference type="UniProtKB" id="P21327"/>
    </source>
</evidence>
<evidence type="ECO:0000269" key="2">
    <source>
    </source>
</evidence>
<evidence type="ECO:0000303" key="3">
    <source>
    </source>
</evidence>
<evidence type="ECO:0000305" key="4"/>
<evidence type="ECO:0000305" key="5">
    <source>
    </source>
</evidence>
<evidence type="ECO:0000312" key="6">
    <source>
        <dbReference type="EMBL" id="EAL50199.1"/>
    </source>
</evidence>
<evidence type="ECO:0000312" key="7">
    <source>
        <dbReference type="Proteomes" id="UP000001926"/>
    </source>
</evidence>
<evidence type="ECO:0007744" key="8">
    <source>
        <dbReference type="PDB" id="4QXD"/>
    </source>
</evidence>
<evidence type="ECO:0007829" key="9">
    <source>
        <dbReference type="PDB" id="4QXD"/>
    </source>
</evidence>
<keyword id="KW-0002">3D-structure</keyword>
<keyword id="KW-0963">Cytoplasm</keyword>
<keyword id="KW-0378">Hydrolase</keyword>
<keyword id="KW-0460">Magnesium</keyword>
<keyword id="KW-0479">Metal-binding</keyword>
<keyword id="KW-1185">Reference proteome</keyword>
<proteinExistence type="evidence at protein level"/>
<accession>C4M633</accession>
<accession>A0A175JU61</accession>
<feature type="chain" id="PRO_0000457980" description="Inositol polyphosphate 1-phosphatase">
    <location>
        <begin position="1"/>
        <end position="285"/>
    </location>
</feature>
<feature type="binding site" evidence="2 8">
    <location>
        <position position="68"/>
    </location>
    <ligand>
        <name>Mg(2+)</name>
        <dbReference type="ChEBI" id="CHEBI:18420"/>
        <label>1</label>
    </ligand>
</feature>
<feature type="binding site" evidence="2 8">
    <location>
        <position position="68"/>
    </location>
    <ligand>
        <name>Mg(2+)</name>
        <dbReference type="ChEBI" id="CHEBI:18420"/>
        <label>3</label>
    </ligand>
</feature>
<feature type="binding site" evidence="2 8">
    <location>
        <position position="106"/>
    </location>
    <ligand>
        <name>Mg(2+)</name>
        <dbReference type="ChEBI" id="CHEBI:18420"/>
        <label>1</label>
    </ligand>
</feature>
<feature type="binding site" evidence="2 8">
    <location>
        <position position="106"/>
    </location>
    <ligand>
        <name>Mg(2+)</name>
        <dbReference type="ChEBI" id="CHEBI:18420"/>
        <label>2</label>
    </ligand>
</feature>
<feature type="binding site" evidence="2 8">
    <location>
        <position position="108"/>
    </location>
    <ligand>
        <name>Mg(2+)</name>
        <dbReference type="ChEBI" id="CHEBI:18420"/>
        <label>1</label>
    </ligand>
</feature>
<feature type="binding site" evidence="1">
    <location>
        <position position="109"/>
    </location>
    <ligand>
        <name>1D-myo-inositol 1,4-bisphosphate</name>
        <dbReference type="ChEBI" id="CHEBI:58282"/>
    </ligand>
</feature>
<feature type="binding site" evidence="2 8">
    <location>
        <position position="109"/>
    </location>
    <ligand>
        <name>Mg(2+)</name>
        <dbReference type="ChEBI" id="CHEBI:18420"/>
        <label>2</label>
    </ligand>
</feature>
<feature type="binding site" evidence="5 8">
    <location>
        <position position="110"/>
    </location>
    <ligand>
        <name>1D-myo-inositol 1,4-bisphosphate</name>
        <dbReference type="ChEBI" id="CHEBI:58282"/>
    </ligand>
</feature>
<feature type="binding site" evidence="5 8">
    <location>
        <position position="111"/>
    </location>
    <ligand>
        <name>1D-myo-inositol 1,4-bisphosphate</name>
        <dbReference type="ChEBI" id="CHEBI:58282"/>
    </ligand>
</feature>
<feature type="binding site" evidence="1">
    <location>
        <position position="173"/>
    </location>
    <ligand>
        <name>1D-myo-inositol 1,4-bisphosphate</name>
        <dbReference type="ChEBI" id="CHEBI:58282"/>
    </ligand>
</feature>
<feature type="binding site" evidence="1">
    <location>
        <position position="195"/>
    </location>
    <ligand>
        <name>1D-myo-inositol 1,4-bisphosphate</name>
        <dbReference type="ChEBI" id="CHEBI:58282"/>
    </ligand>
</feature>
<feature type="binding site" evidence="1">
    <location>
        <position position="197"/>
    </location>
    <ligand>
        <name>1D-myo-inositol 1,4-bisphosphate</name>
        <dbReference type="ChEBI" id="CHEBI:58282"/>
    </ligand>
</feature>
<feature type="binding site" evidence="1">
    <location>
        <position position="200"/>
    </location>
    <ligand>
        <name>1D-myo-inositol 1,4-bisphosphate</name>
        <dbReference type="ChEBI" id="CHEBI:58282"/>
    </ligand>
</feature>
<feature type="binding site" evidence="2 8">
    <location>
        <position position="223"/>
    </location>
    <ligand>
        <name>Mg(2+)</name>
        <dbReference type="ChEBI" id="CHEBI:18420"/>
        <label>2</label>
    </ligand>
</feature>
<feature type="strand" evidence="9">
    <location>
        <begin position="2"/>
        <end position="4"/>
    </location>
</feature>
<feature type="helix" evidence="9">
    <location>
        <begin position="5"/>
        <end position="24"/>
    </location>
</feature>
<feature type="strand" evidence="9">
    <location>
        <begin position="32"/>
        <end position="34"/>
    </location>
</feature>
<feature type="strand" evidence="9">
    <location>
        <begin position="40"/>
        <end position="42"/>
    </location>
</feature>
<feature type="helix" evidence="9">
    <location>
        <begin position="43"/>
        <end position="59"/>
    </location>
</feature>
<feature type="strand" evidence="9">
    <location>
        <begin position="64"/>
        <end position="70"/>
    </location>
</feature>
<feature type="helix" evidence="9">
    <location>
        <begin position="77"/>
        <end position="79"/>
    </location>
</feature>
<feature type="strand" evidence="9">
    <location>
        <begin position="95"/>
        <end position="97"/>
    </location>
</feature>
<feature type="helix" evidence="9">
    <location>
        <begin position="98"/>
        <end position="100"/>
    </location>
</feature>
<feature type="strand" evidence="9">
    <location>
        <begin position="101"/>
        <end position="109"/>
    </location>
</feature>
<feature type="helix" evidence="9">
    <location>
        <begin position="111"/>
        <end position="115"/>
    </location>
</feature>
<feature type="helix" evidence="9">
    <location>
        <begin position="119"/>
        <end position="121"/>
    </location>
</feature>
<feature type="strand" evidence="9">
    <location>
        <begin position="123"/>
        <end position="130"/>
    </location>
</feature>
<feature type="strand" evidence="9">
    <location>
        <begin position="133"/>
        <end position="141"/>
    </location>
</feature>
<feature type="turn" evidence="9">
    <location>
        <begin position="142"/>
        <end position="146"/>
    </location>
</feature>
<feature type="strand" evidence="9">
    <location>
        <begin position="147"/>
        <end position="152"/>
    </location>
</feature>
<feature type="strand" evidence="9">
    <location>
        <begin position="166"/>
        <end position="172"/>
    </location>
</feature>
<feature type="helix" evidence="9">
    <location>
        <begin position="174"/>
        <end position="176"/>
    </location>
</feature>
<feature type="turn" evidence="9">
    <location>
        <begin position="179"/>
        <end position="184"/>
    </location>
</feature>
<feature type="strand" evidence="9">
    <location>
        <begin position="189"/>
        <end position="193"/>
    </location>
</feature>
<feature type="helix" evidence="9">
    <location>
        <begin position="197"/>
        <end position="205"/>
    </location>
</feature>
<feature type="strand" evidence="9">
    <location>
        <begin position="210"/>
        <end position="214"/>
    </location>
</feature>
<feature type="helix" evidence="9">
    <location>
        <begin position="221"/>
        <end position="234"/>
    </location>
</feature>
<feature type="strand" evidence="9">
    <location>
        <begin position="237"/>
        <end position="239"/>
    </location>
</feature>
<feature type="strand" evidence="9">
    <location>
        <begin position="262"/>
        <end position="265"/>
    </location>
</feature>
<feature type="helix" evidence="9">
    <location>
        <begin position="267"/>
        <end position="272"/>
    </location>
</feature>
<feature type="helix" evidence="9">
    <location>
        <begin position="273"/>
        <end position="280"/>
    </location>
</feature>
<sequence length="285" mass="32051">MQTSLFEFANVLITAVKEASYSISKFKEEVEIKYKSDGSEVTQVDTQSQQIIFSIIKNKYPTINIIGEEDVENGIPDNQLPTITQLSFGSLENKIININDIIIYVDPLDGTDCYTHKQYDSVCVLVGVTYKGKPMIGIVSKPFYNNEITFAIENYISSISLQPLNDKIIFVCSKKNDIQHLIKSFPDPYEVKYKGGSGAKMMAIIHQEADIYYHPLIQSCTWDTLAAQVILEAQGGIVCDIYGNPLCYPSSKKESMRHKKGVLCLSPRAKKYLPYMLSISKTILL</sequence>
<gene>
    <name evidence="6" type="ORF">EHI_179820</name>
</gene>
<name>INPP_ENTH1</name>
<reference evidence="6" key="1">
    <citation type="journal article" date="2005" name="Nature">
        <title>The genome of the protist parasite Entamoeba histolytica.</title>
        <authorList>
            <person name="Loftus B.J."/>
            <person name="Anderson I."/>
            <person name="Davies R."/>
            <person name="Alsmark U.C."/>
            <person name="Samuelson J."/>
            <person name="Amedeo P."/>
            <person name="Roncaglia P."/>
            <person name="Berriman M."/>
            <person name="Hirt R.P."/>
            <person name="Mann B.J."/>
            <person name="Nozaki T."/>
            <person name="Suh B."/>
            <person name="Pop M."/>
            <person name="Duchene M."/>
            <person name="Ackers J."/>
            <person name="Tannich E."/>
            <person name="Leippe M."/>
            <person name="Hofer M."/>
            <person name="Bruchhaus I."/>
            <person name="Willhoeft U."/>
            <person name="Bhattacharya A."/>
            <person name="Chillingworth T."/>
            <person name="Churcher C.M."/>
            <person name="Hance Z."/>
            <person name="Harris B."/>
            <person name="Harris D."/>
            <person name="Jagels K."/>
            <person name="Moule S."/>
            <person name="Mungall K.L."/>
            <person name="Ormond D."/>
            <person name="Squares R."/>
            <person name="Whitehead S."/>
            <person name="Quail M.A."/>
            <person name="Rabbinowitsch E."/>
            <person name="Norbertczak H."/>
            <person name="Price C."/>
            <person name="Wang Z."/>
            <person name="Guillen N."/>
            <person name="Gilchrist C."/>
            <person name="Stroup S.E."/>
            <person name="Bhattacharya S."/>
            <person name="Lohia A."/>
            <person name="Foster P.G."/>
            <person name="Sicheritz-Ponten T."/>
            <person name="Weber C."/>
            <person name="Singh U."/>
            <person name="Mukherjee C."/>
            <person name="El-Sayed N.M.A."/>
            <person name="Petri W.A."/>
            <person name="Clark C.G."/>
            <person name="Embley T.M."/>
            <person name="Barrell B.G."/>
            <person name="Fraser C.M."/>
            <person name="Hall N."/>
        </authorList>
    </citation>
    <scope>NUCLEOTIDE SEQUENCE [LARGE SCALE GENOMIC DNA]</scope>
    <source>
        <strain evidence="6">ATCC 30459 / HM-1:IMSS / ABRM</strain>
    </source>
</reference>
<reference evidence="8" key="2">
    <citation type="journal article" date="2014" name="Acta Crystallogr. D">
        <title>Structure-based identification of inositol polyphosphate 1-phosphatase from Entamoeba histolytica.</title>
        <authorList>
            <person name="Faisal Tarique K."/>
            <person name="Arif Abdul Rehman S."/>
            <person name="Betzel C."/>
            <person name="Gourinath S."/>
        </authorList>
    </citation>
    <scope>X-RAY CRYSTALLOGRAPHY (2.55 ANGSTROMS) IN COMPLEX WITH MAGNESIUM AND PHOSPHATE</scope>
    <scope>FUNCTION</scope>
    <scope>CATALYTIC ACTIVITY</scope>
    <scope>COFACTOR</scope>
    <scope>ACTIVITY REGULATION</scope>
    <scope>BIOPHYSICOCHEMICAL PROPERTIES</scope>
    <scope>SUBUNIT</scope>
    <scope>SUBCELLULAR LOCATION</scope>
    <scope>DEVELOPMENTAL STAGE</scope>
</reference>
<dbReference type="EC" id="3.1.3.57" evidence="2"/>
<dbReference type="EC" id="3.1.3.7" evidence="2"/>
<dbReference type="EMBL" id="DS571291">
    <property type="protein sequence ID" value="EAL50199.1"/>
    <property type="molecule type" value="Genomic_DNA"/>
</dbReference>
<dbReference type="RefSeq" id="XP_655585.1">
    <property type="nucleotide sequence ID" value="XM_650493.1"/>
</dbReference>
<dbReference type="PDB" id="4QXD">
    <property type="method" value="X-ray"/>
    <property type="resolution" value="2.55 A"/>
    <property type="chains" value="A/B=1-285"/>
</dbReference>
<dbReference type="PDBsum" id="4QXD"/>
<dbReference type="SMR" id="C4M633"/>
<dbReference type="FunCoup" id="C4M633">
    <property type="interactions" value="85"/>
</dbReference>
<dbReference type="STRING" id="5759.C4M633"/>
<dbReference type="EnsemblProtists" id="GAT96914">
    <property type="protein sequence ID" value="GAT96914"/>
    <property type="gene ID" value="CL6EHI_179820"/>
</dbReference>
<dbReference type="EnsemblProtists" id="rna_EHI_179820-1">
    <property type="protein sequence ID" value="rna_EHI_179820-1"/>
    <property type="gene ID" value="EHI_179820"/>
</dbReference>
<dbReference type="GeneID" id="3409888"/>
<dbReference type="KEGG" id="ehi:EHI_179820"/>
<dbReference type="VEuPathDB" id="AmoebaDB:EHI5A_007340"/>
<dbReference type="VEuPathDB" id="AmoebaDB:EHI7A_011560"/>
<dbReference type="VEuPathDB" id="AmoebaDB:EHI8A_009830"/>
<dbReference type="VEuPathDB" id="AmoebaDB:EHI_179820"/>
<dbReference type="VEuPathDB" id="AmoebaDB:KM1_005810"/>
<dbReference type="eggNOG" id="KOG3099">
    <property type="taxonomic scope" value="Eukaryota"/>
</dbReference>
<dbReference type="HOGENOM" id="CLU_034742_2_0_1"/>
<dbReference type="InParanoid" id="C4M633"/>
<dbReference type="OMA" id="QTEADRC"/>
<dbReference type="OrthoDB" id="411145at2759"/>
<dbReference type="EvolutionaryTrace" id="C4M633"/>
<dbReference type="Proteomes" id="UP000001926">
    <property type="component" value="Partially assembled WGS sequence"/>
</dbReference>
<dbReference type="GO" id="GO:0005737">
    <property type="term" value="C:cytoplasm"/>
    <property type="evidence" value="ECO:0000314"/>
    <property type="project" value="UniProtKB"/>
</dbReference>
<dbReference type="GO" id="GO:0008441">
    <property type="term" value="F:3'(2'),5'-bisphosphate nucleotidase activity"/>
    <property type="evidence" value="ECO:0000314"/>
    <property type="project" value="UniProtKB"/>
</dbReference>
<dbReference type="GO" id="GO:0004441">
    <property type="term" value="F:inositol-1,4-bisphosphate 1-phosphatase activity"/>
    <property type="evidence" value="ECO:0000314"/>
    <property type="project" value="UniProtKB"/>
</dbReference>
<dbReference type="GO" id="GO:0000287">
    <property type="term" value="F:magnesium ion binding"/>
    <property type="evidence" value="ECO:0000314"/>
    <property type="project" value="UniProtKB"/>
</dbReference>
<dbReference type="FunFam" id="3.30.540.10:FF:000012">
    <property type="entry name" value="Blast:Putative inositol monophosphatase 3"/>
    <property type="match status" value="1"/>
</dbReference>
<dbReference type="Gene3D" id="3.40.190.80">
    <property type="match status" value="1"/>
</dbReference>
<dbReference type="Gene3D" id="3.30.540.10">
    <property type="entry name" value="Fructose-1,6-Bisphosphatase, subunit A, domain 1"/>
    <property type="match status" value="1"/>
</dbReference>
<dbReference type="InterPro" id="IPR050725">
    <property type="entry name" value="CysQ/Inositol_MonoPase"/>
</dbReference>
<dbReference type="InterPro" id="IPR000760">
    <property type="entry name" value="Inositol_monophosphatase-like"/>
</dbReference>
<dbReference type="PANTHER" id="PTHR43028">
    <property type="entry name" value="3'(2'),5'-BISPHOSPHATE NUCLEOTIDASE 1"/>
    <property type="match status" value="1"/>
</dbReference>
<dbReference type="PANTHER" id="PTHR43028:SF5">
    <property type="entry name" value="3'(2'),5'-BISPHOSPHATE NUCLEOTIDASE 1"/>
    <property type="match status" value="1"/>
</dbReference>
<dbReference type="Pfam" id="PF00459">
    <property type="entry name" value="Inositol_P"/>
    <property type="match status" value="1"/>
</dbReference>
<dbReference type="SUPFAM" id="SSF56655">
    <property type="entry name" value="Carbohydrate phosphatase"/>
    <property type="match status" value="1"/>
</dbReference>
<protein>
    <recommendedName>
        <fullName evidence="3">Inositol polyphosphate 1-phosphatase</fullName>
        <shortName evidence="3">EhIPPase</shortName>
        <ecNumber evidence="2">3.1.3.57</ecNumber>
    </recommendedName>
    <alternativeName>
        <fullName evidence="3">3'(2'),5'-bisphosphate nucleotidase</fullName>
        <ecNumber evidence="2">3.1.3.7</ecNumber>
    </alternativeName>
</protein>